<proteinExistence type="inferred from homology"/>
<dbReference type="EC" id="2.1.3.2" evidence="1"/>
<dbReference type="EMBL" id="BA000026">
    <property type="protein sequence ID" value="BAC44582.1"/>
    <property type="molecule type" value="Genomic_DNA"/>
</dbReference>
<dbReference type="RefSeq" id="WP_011077611.1">
    <property type="nucleotide sequence ID" value="NC_004432.1"/>
</dbReference>
<dbReference type="SMR" id="Q8EUX9"/>
<dbReference type="FunCoup" id="Q8EUX9">
    <property type="interactions" value="230"/>
</dbReference>
<dbReference type="STRING" id="272633.gene:10731911"/>
<dbReference type="KEGG" id="mpe:MYPE7890"/>
<dbReference type="eggNOG" id="COG0540">
    <property type="taxonomic scope" value="Bacteria"/>
</dbReference>
<dbReference type="HOGENOM" id="CLU_043846_2_1_14"/>
<dbReference type="InParanoid" id="Q8EUX9"/>
<dbReference type="UniPathway" id="UPA00070">
    <property type="reaction ID" value="UER00116"/>
</dbReference>
<dbReference type="Proteomes" id="UP000002522">
    <property type="component" value="Chromosome"/>
</dbReference>
<dbReference type="GO" id="GO:0005829">
    <property type="term" value="C:cytosol"/>
    <property type="evidence" value="ECO:0007669"/>
    <property type="project" value="TreeGrafter"/>
</dbReference>
<dbReference type="GO" id="GO:0016597">
    <property type="term" value="F:amino acid binding"/>
    <property type="evidence" value="ECO:0007669"/>
    <property type="project" value="InterPro"/>
</dbReference>
<dbReference type="GO" id="GO:0004070">
    <property type="term" value="F:aspartate carbamoyltransferase activity"/>
    <property type="evidence" value="ECO:0007669"/>
    <property type="project" value="UniProtKB-UniRule"/>
</dbReference>
<dbReference type="GO" id="GO:0006207">
    <property type="term" value="P:'de novo' pyrimidine nucleobase biosynthetic process"/>
    <property type="evidence" value="ECO:0007669"/>
    <property type="project" value="InterPro"/>
</dbReference>
<dbReference type="GO" id="GO:0044205">
    <property type="term" value="P:'de novo' UMP biosynthetic process"/>
    <property type="evidence" value="ECO:0007669"/>
    <property type="project" value="UniProtKB-UniRule"/>
</dbReference>
<dbReference type="GO" id="GO:0006520">
    <property type="term" value="P:amino acid metabolic process"/>
    <property type="evidence" value="ECO:0007669"/>
    <property type="project" value="InterPro"/>
</dbReference>
<dbReference type="FunFam" id="3.40.50.1370:FF:000011">
    <property type="entry name" value="Aspartate carbamoyltransferase"/>
    <property type="match status" value="1"/>
</dbReference>
<dbReference type="Gene3D" id="3.40.50.1370">
    <property type="entry name" value="Aspartate/ornithine carbamoyltransferase"/>
    <property type="match status" value="2"/>
</dbReference>
<dbReference type="HAMAP" id="MF_00001">
    <property type="entry name" value="Asp_carb_tr"/>
    <property type="match status" value="1"/>
</dbReference>
<dbReference type="InterPro" id="IPR006132">
    <property type="entry name" value="Asp/Orn_carbamoyltranf_P-bd"/>
</dbReference>
<dbReference type="InterPro" id="IPR006130">
    <property type="entry name" value="Asp/Orn_carbamoylTrfase"/>
</dbReference>
<dbReference type="InterPro" id="IPR036901">
    <property type="entry name" value="Asp/Orn_carbamoylTrfase_sf"/>
</dbReference>
<dbReference type="InterPro" id="IPR002082">
    <property type="entry name" value="Asp_carbamoyltransf"/>
</dbReference>
<dbReference type="InterPro" id="IPR006131">
    <property type="entry name" value="Asp_carbamoyltransf_Asp/Orn-bd"/>
</dbReference>
<dbReference type="NCBIfam" id="TIGR00670">
    <property type="entry name" value="asp_carb_tr"/>
    <property type="match status" value="1"/>
</dbReference>
<dbReference type="NCBIfam" id="NF002032">
    <property type="entry name" value="PRK00856.1"/>
    <property type="match status" value="1"/>
</dbReference>
<dbReference type="PANTHER" id="PTHR45753:SF6">
    <property type="entry name" value="ASPARTATE CARBAMOYLTRANSFERASE"/>
    <property type="match status" value="1"/>
</dbReference>
<dbReference type="PANTHER" id="PTHR45753">
    <property type="entry name" value="ORNITHINE CARBAMOYLTRANSFERASE, MITOCHONDRIAL"/>
    <property type="match status" value="1"/>
</dbReference>
<dbReference type="Pfam" id="PF00185">
    <property type="entry name" value="OTCace"/>
    <property type="match status" value="1"/>
</dbReference>
<dbReference type="Pfam" id="PF02729">
    <property type="entry name" value="OTCace_N"/>
    <property type="match status" value="1"/>
</dbReference>
<dbReference type="PRINTS" id="PR00100">
    <property type="entry name" value="AOTCASE"/>
</dbReference>
<dbReference type="PRINTS" id="PR00101">
    <property type="entry name" value="ATCASE"/>
</dbReference>
<dbReference type="SUPFAM" id="SSF53671">
    <property type="entry name" value="Aspartate/ornithine carbamoyltransferase"/>
    <property type="match status" value="1"/>
</dbReference>
<dbReference type="PROSITE" id="PS00097">
    <property type="entry name" value="CARBAMOYLTRANSFERASE"/>
    <property type="match status" value="1"/>
</dbReference>
<sequence length="300" mass="34533">MALYELTNLLSIDDLTNEQILNLIKRAIDIKENNNQIKRDDLYVANLFFENSTRTKMSFVVAQNKLGLKSIDFEVSTSSVNKGETLYDTCKTLEMIGVNMLVIRHSQKQYYKELENLEIPIINGGDGSGEHPTQCLLDLMTIYEKFKSFEGLKIAIVGDIKNSRVAKSNYKALTKLGAIVHFVAPDKFKDDEFNNYKEFDEIINEIDVCMLLRVQHERHESQDKTQEFINIYHQQHGLSLPRYNKLKENAIVMHPAPVNRGVEIDTTLVESDKSVIFLQMKNGMFMRQAVLEYIIAENNL</sequence>
<accession>Q8EUX9</accession>
<feature type="chain" id="PRO_0000113162" description="Aspartate carbamoyltransferase catalytic subunit">
    <location>
        <begin position="1"/>
        <end position="300"/>
    </location>
</feature>
<feature type="binding site" evidence="1">
    <location>
        <position position="54"/>
    </location>
    <ligand>
        <name>carbamoyl phosphate</name>
        <dbReference type="ChEBI" id="CHEBI:58228"/>
    </ligand>
</feature>
<feature type="binding site" evidence="1">
    <location>
        <position position="55"/>
    </location>
    <ligand>
        <name>carbamoyl phosphate</name>
        <dbReference type="ChEBI" id="CHEBI:58228"/>
    </ligand>
</feature>
<feature type="binding site" evidence="1">
    <location>
        <position position="82"/>
    </location>
    <ligand>
        <name>L-aspartate</name>
        <dbReference type="ChEBI" id="CHEBI:29991"/>
    </ligand>
</feature>
<feature type="binding site" evidence="1">
    <location>
        <position position="104"/>
    </location>
    <ligand>
        <name>carbamoyl phosphate</name>
        <dbReference type="ChEBI" id="CHEBI:58228"/>
    </ligand>
</feature>
<feature type="binding site" evidence="1">
    <location>
        <position position="131"/>
    </location>
    <ligand>
        <name>carbamoyl phosphate</name>
        <dbReference type="ChEBI" id="CHEBI:58228"/>
    </ligand>
</feature>
<feature type="binding site" evidence="1">
    <location>
        <position position="134"/>
    </location>
    <ligand>
        <name>carbamoyl phosphate</name>
        <dbReference type="ChEBI" id="CHEBI:58228"/>
    </ligand>
</feature>
<feature type="binding site" evidence="1">
    <location>
        <position position="164"/>
    </location>
    <ligand>
        <name>L-aspartate</name>
        <dbReference type="ChEBI" id="CHEBI:29991"/>
    </ligand>
</feature>
<feature type="binding site" evidence="1">
    <location>
        <position position="213"/>
    </location>
    <ligand>
        <name>L-aspartate</name>
        <dbReference type="ChEBI" id="CHEBI:29991"/>
    </ligand>
</feature>
<feature type="binding site" evidence="1">
    <location>
        <position position="256"/>
    </location>
    <ligand>
        <name>carbamoyl phosphate</name>
        <dbReference type="ChEBI" id="CHEBI:58228"/>
    </ligand>
</feature>
<feature type="binding site" evidence="1">
    <location>
        <position position="257"/>
    </location>
    <ligand>
        <name>carbamoyl phosphate</name>
        <dbReference type="ChEBI" id="CHEBI:58228"/>
    </ligand>
</feature>
<reference key="1">
    <citation type="journal article" date="2002" name="Nucleic Acids Res.">
        <title>The complete genomic sequence of Mycoplasma penetrans, an intracellular bacterial pathogen in humans.</title>
        <authorList>
            <person name="Sasaki Y."/>
            <person name="Ishikawa J."/>
            <person name="Yamashita A."/>
            <person name="Oshima K."/>
            <person name="Kenri T."/>
            <person name="Furuya K."/>
            <person name="Yoshino C."/>
            <person name="Horino A."/>
            <person name="Shiba T."/>
            <person name="Sasaki T."/>
            <person name="Hattori M."/>
        </authorList>
    </citation>
    <scope>NUCLEOTIDE SEQUENCE [LARGE SCALE GENOMIC DNA]</scope>
    <source>
        <strain>HF-2</strain>
    </source>
</reference>
<gene>
    <name evidence="1" type="primary">pyrB</name>
    <name type="ordered locus">MYPE7890</name>
</gene>
<name>PYRB_MALP2</name>
<evidence type="ECO:0000255" key="1">
    <source>
        <dbReference type="HAMAP-Rule" id="MF_00001"/>
    </source>
</evidence>
<organism>
    <name type="scientific">Malacoplasma penetrans (strain HF-2)</name>
    <name type="common">Mycoplasma penetrans</name>
    <dbReference type="NCBI Taxonomy" id="272633"/>
    <lineage>
        <taxon>Bacteria</taxon>
        <taxon>Bacillati</taxon>
        <taxon>Mycoplasmatota</taxon>
        <taxon>Mycoplasmoidales</taxon>
        <taxon>Mycoplasmoidaceae</taxon>
        <taxon>Malacoplasma</taxon>
    </lineage>
</organism>
<comment type="function">
    <text evidence="1">Catalyzes the condensation of carbamoyl phosphate and aspartate to form carbamoyl aspartate and inorganic phosphate, the committed step in the de novo pyrimidine nucleotide biosynthesis pathway.</text>
</comment>
<comment type="catalytic activity">
    <reaction evidence="1">
        <text>carbamoyl phosphate + L-aspartate = N-carbamoyl-L-aspartate + phosphate + H(+)</text>
        <dbReference type="Rhea" id="RHEA:20013"/>
        <dbReference type="ChEBI" id="CHEBI:15378"/>
        <dbReference type="ChEBI" id="CHEBI:29991"/>
        <dbReference type="ChEBI" id="CHEBI:32814"/>
        <dbReference type="ChEBI" id="CHEBI:43474"/>
        <dbReference type="ChEBI" id="CHEBI:58228"/>
        <dbReference type="EC" id="2.1.3.2"/>
    </reaction>
</comment>
<comment type="pathway">
    <text evidence="1">Pyrimidine metabolism; UMP biosynthesis via de novo pathway; (S)-dihydroorotate from bicarbonate: step 2/3.</text>
</comment>
<comment type="subunit">
    <text evidence="1">Heterododecamer (2C3:3R2) of six catalytic PyrB chains organized as two trimers (C3), and six regulatory PyrI chains organized as three dimers (R2).</text>
</comment>
<comment type="similarity">
    <text evidence="1">Belongs to the aspartate/ornithine carbamoyltransferase superfamily. ATCase family.</text>
</comment>
<protein>
    <recommendedName>
        <fullName evidence="1">Aspartate carbamoyltransferase catalytic subunit</fullName>
        <ecNumber evidence="1">2.1.3.2</ecNumber>
    </recommendedName>
    <alternativeName>
        <fullName evidence="1">Aspartate transcarbamylase</fullName>
        <shortName evidence="1">ATCase</shortName>
    </alternativeName>
</protein>
<keyword id="KW-0665">Pyrimidine biosynthesis</keyword>
<keyword id="KW-1185">Reference proteome</keyword>
<keyword id="KW-0808">Transferase</keyword>